<sequence>MVCIPCIVIPVLLWIFKKFLEPYIYPVVSRIWPKKAVQQSGDKNMSKVDCKGAGTNGLPTKGPTEVSDKKKD</sequence>
<reference key="1">
    <citation type="journal article" date="2005" name="Science">
        <title>The transcriptional landscape of the mammalian genome.</title>
        <authorList>
            <person name="Carninci P."/>
            <person name="Kasukawa T."/>
            <person name="Katayama S."/>
            <person name="Gough J."/>
            <person name="Frith M.C."/>
            <person name="Maeda N."/>
            <person name="Oyama R."/>
            <person name="Ravasi T."/>
            <person name="Lenhard B."/>
            <person name="Wells C."/>
            <person name="Kodzius R."/>
            <person name="Shimokawa K."/>
            <person name="Bajic V.B."/>
            <person name="Brenner S.E."/>
            <person name="Batalov S."/>
            <person name="Forrest A.R."/>
            <person name="Zavolan M."/>
            <person name="Davis M.J."/>
            <person name="Wilming L.G."/>
            <person name="Aidinis V."/>
            <person name="Allen J.E."/>
            <person name="Ambesi-Impiombato A."/>
            <person name="Apweiler R."/>
            <person name="Aturaliya R.N."/>
            <person name="Bailey T.L."/>
            <person name="Bansal M."/>
            <person name="Baxter L."/>
            <person name="Beisel K.W."/>
            <person name="Bersano T."/>
            <person name="Bono H."/>
            <person name="Chalk A.M."/>
            <person name="Chiu K.P."/>
            <person name="Choudhary V."/>
            <person name="Christoffels A."/>
            <person name="Clutterbuck D.R."/>
            <person name="Crowe M.L."/>
            <person name="Dalla E."/>
            <person name="Dalrymple B.P."/>
            <person name="de Bono B."/>
            <person name="Della Gatta G."/>
            <person name="di Bernardo D."/>
            <person name="Down T."/>
            <person name="Engstrom P."/>
            <person name="Fagiolini M."/>
            <person name="Faulkner G."/>
            <person name="Fletcher C.F."/>
            <person name="Fukushima T."/>
            <person name="Furuno M."/>
            <person name="Futaki S."/>
            <person name="Gariboldi M."/>
            <person name="Georgii-Hemming P."/>
            <person name="Gingeras T.R."/>
            <person name="Gojobori T."/>
            <person name="Green R.E."/>
            <person name="Gustincich S."/>
            <person name="Harbers M."/>
            <person name="Hayashi Y."/>
            <person name="Hensch T.K."/>
            <person name="Hirokawa N."/>
            <person name="Hill D."/>
            <person name="Huminiecki L."/>
            <person name="Iacono M."/>
            <person name="Ikeo K."/>
            <person name="Iwama A."/>
            <person name="Ishikawa T."/>
            <person name="Jakt M."/>
            <person name="Kanapin A."/>
            <person name="Katoh M."/>
            <person name="Kawasawa Y."/>
            <person name="Kelso J."/>
            <person name="Kitamura H."/>
            <person name="Kitano H."/>
            <person name="Kollias G."/>
            <person name="Krishnan S.P."/>
            <person name="Kruger A."/>
            <person name="Kummerfeld S.K."/>
            <person name="Kurochkin I.V."/>
            <person name="Lareau L.F."/>
            <person name="Lazarevic D."/>
            <person name="Lipovich L."/>
            <person name="Liu J."/>
            <person name="Liuni S."/>
            <person name="McWilliam S."/>
            <person name="Madan Babu M."/>
            <person name="Madera M."/>
            <person name="Marchionni L."/>
            <person name="Matsuda H."/>
            <person name="Matsuzawa S."/>
            <person name="Miki H."/>
            <person name="Mignone F."/>
            <person name="Miyake S."/>
            <person name="Morris K."/>
            <person name="Mottagui-Tabar S."/>
            <person name="Mulder N."/>
            <person name="Nakano N."/>
            <person name="Nakauchi H."/>
            <person name="Ng P."/>
            <person name="Nilsson R."/>
            <person name="Nishiguchi S."/>
            <person name="Nishikawa S."/>
            <person name="Nori F."/>
            <person name="Ohara O."/>
            <person name="Okazaki Y."/>
            <person name="Orlando V."/>
            <person name="Pang K.C."/>
            <person name="Pavan W.J."/>
            <person name="Pavesi G."/>
            <person name="Pesole G."/>
            <person name="Petrovsky N."/>
            <person name="Piazza S."/>
            <person name="Reed J."/>
            <person name="Reid J.F."/>
            <person name="Ring B.Z."/>
            <person name="Ringwald M."/>
            <person name="Rost B."/>
            <person name="Ruan Y."/>
            <person name="Salzberg S.L."/>
            <person name="Sandelin A."/>
            <person name="Schneider C."/>
            <person name="Schoenbach C."/>
            <person name="Sekiguchi K."/>
            <person name="Semple C.A."/>
            <person name="Seno S."/>
            <person name="Sessa L."/>
            <person name="Sheng Y."/>
            <person name="Shibata Y."/>
            <person name="Shimada H."/>
            <person name="Shimada K."/>
            <person name="Silva D."/>
            <person name="Sinclair B."/>
            <person name="Sperling S."/>
            <person name="Stupka E."/>
            <person name="Sugiura K."/>
            <person name="Sultana R."/>
            <person name="Takenaka Y."/>
            <person name="Taki K."/>
            <person name="Tammoja K."/>
            <person name="Tan S.L."/>
            <person name="Tang S."/>
            <person name="Taylor M.S."/>
            <person name="Tegner J."/>
            <person name="Teichmann S.A."/>
            <person name="Ueda H.R."/>
            <person name="van Nimwegen E."/>
            <person name="Verardo R."/>
            <person name="Wei C.L."/>
            <person name="Yagi K."/>
            <person name="Yamanishi H."/>
            <person name="Zabarovsky E."/>
            <person name="Zhu S."/>
            <person name="Zimmer A."/>
            <person name="Hide W."/>
            <person name="Bult C."/>
            <person name="Grimmond S.M."/>
            <person name="Teasdale R.D."/>
            <person name="Liu E.T."/>
            <person name="Brusic V."/>
            <person name="Quackenbush J."/>
            <person name="Wahlestedt C."/>
            <person name="Mattick J.S."/>
            <person name="Hume D.A."/>
            <person name="Kai C."/>
            <person name="Sasaki D."/>
            <person name="Tomaru Y."/>
            <person name="Fukuda S."/>
            <person name="Kanamori-Katayama M."/>
            <person name="Suzuki M."/>
            <person name="Aoki J."/>
            <person name="Arakawa T."/>
            <person name="Iida J."/>
            <person name="Imamura K."/>
            <person name="Itoh M."/>
            <person name="Kato T."/>
            <person name="Kawaji H."/>
            <person name="Kawagashira N."/>
            <person name="Kawashima T."/>
            <person name="Kojima M."/>
            <person name="Kondo S."/>
            <person name="Konno H."/>
            <person name="Nakano K."/>
            <person name="Ninomiya N."/>
            <person name="Nishio T."/>
            <person name="Okada M."/>
            <person name="Plessy C."/>
            <person name="Shibata K."/>
            <person name="Shiraki T."/>
            <person name="Suzuki S."/>
            <person name="Tagami M."/>
            <person name="Waki K."/>
            <person name="Watahiki A."/>
            <person name="Okamura-Oho Y."/>
            <person name="Suzuki H."/>
            <person name="Kawai J."/>
            <person name="Hayashizaki Y."/>
        </authorList>
    </citation>
    <scope>NUCLEOTIDE SEQUENCE [LARGE SCALE MRNA]</scope>
    <source>
        <strain>C57BL/6J</strain>
        <tissue>Embryo</tissue>
        <tissue>Medulla oblongata</tissue>
        <tissue>Placenta</tissue>
    </source>
</reference>
<reference key="2">
    <citation type="journal article" date="2004" name="Genome Res.">
        <title>The status, quality, and expansion of the NIH full-length cDNA project: the Mammalian Gene Collection (MGC).</title>
        <authorList>
            <consortium name="The MGC Project Team"/>
        </authorList>
    </citation>
    <scope>NUCLEOTIDE SEQUENCE [LARGE SCALE MRNA]</scope>
    <source>
        <strain>FVB/N</strain>
        <tissue>Colon</tissue>
        <tissue>Eye</tissue>
        <tissue>Mammary tumor</tissue>
    </source>
</reference>
<name>CR032_MOUSE</name>
<comment type="function">
    <text evidence="1">May activate the NF-kappa-B signaling pathway.</text>
</comment>
<comment type="subunit">
    <text evidence="1">Interacts with DERL1 and AMFR.</text>
</comment>
<comment type="subcellular location">
    <subcellularLocation>
        <location evidence="1">Endoplasmic reticulum</location>
    </subcellularLocation>
    <subcellularLocation>
        <location evidence="1">Lipid droplet</location>
    </subcellularLocation>
</comment>
<comment type="PTM">
    <text evidence="1">Undergoes ER-associated degradation (ERAD).</text>
</comment>
<comment type="similarity">
    <text evidence="3">Belongs to the UPF0729 family.</text>
</comment>
<accession>Q91WE4</accession>
<accession>Q3V3U8</accession>
<organism>
    <name type="scientific">Mus musculus</name>
    <name type="common">Mouse</name>
    <dbReference type="NCBI Taxonomy" id="10090"/>
    <lineage>
        <taxon>Eukaryota</taxon>
        <taxon>Metazoa</taxon>
        <taxon>Chordata</taxon>
        <taxon>Craniata</taxon>
        <taxon>Vertebrata</taxon>
        <taxon>Euteleostomi</taxon>
        <taxon>Mammalia</taxon>
        <taxon>Eutheria</taxon>
        <taxon>Euarchontoglires</taxon>
        <taxon>Glires</taxon>
        <taxon>Rodentia</taxon>
        <taxon>Myomorpha</taxon>
        <taxon>Muroidea</taxon>
        <taxon>Muridae</taxon>
        <taxon>Murinae</taxon>
        <taxon>Mus</taxon>
        <taxon>Mus</taxon>
    </lineage>
</organism>
<protein>
    <recommendedName>
        <fullName>UPF0729 protein C18orf32 homolog</fullName>
    </recommendedName>
</protein>
<dbReference type="EMBL" id="AK031999">
    <property type="protein sequence ID" value="BAE20478.1"/>
    <property type="molecule type" value="mRNA"/>
</dbReference>
<dbReference type="EMBL" id="AK077642">
    <property type="protein sequence ID" value="BAC36920.1"/>
    <property type="molecule type" value="mRNA"/>
</dbReference>
<dbReference type="EMBL" id="AK131658">
    <property type="protein sequence ID" value="BAE20746.1"/>
    <property type="molecule type" value="mRNA"/>
</dbReference>
<dbReference type="EMBL" id="BC016084">
    <property type="protein sequence ID" value="AAH16084.1"/>
    <property type="molecule type" value="mRNA"/>
</dbReference>
<dbReference type="EMBL" id="BC027819">
    <property type="protein sequence ID" value="AAH27819.1"/>
    <property type="molecule type" value="mRNA"/>
</dbReference>
<dbReference type="EMBL" id="BC031181">
    <property type="protein sequence ID" value="AAH31181.1"/>
    <property type="molecule type" value="mRNA"/>
</dbReference>
<dbReference type="CCDS" id="CCDS37859.1"/>
<dbReference type="RefSeq" id="NP_001001181.1">
    <property type="nucleotide sequence ID" value="NM_001001181.4"/>
</dbReference>
<dbReference type="RefSeq" id="NP_001345232.1">
    <property type="nucleotide sequence ID" value="NM_001358303.1"/>
</dbReference>
<dbReference type="RefSeq" id="NP_001345233.1">
    <property type="nucleotide sequence ID" value="NM_001358304.1"/>
</dbReference>
<dbReference type="RefSeq" id="NP_001345234.1">
    <property type="nucleotide sequence ID" value="NM_001358305.1"/>
</dbReference>
<dbReference type="RefSeq" id="XP_006526143.1">
    <property type="nucleotide sequence ID" value="XM_006526080.1"/>
</dbReference>
<dbReference type="RefSeq" id="XP_006526144.1">
    <property type="nucleotide sequence ID" value="XM_006526081.3"/>
</dbReference>
<dbReference type="SMR" id="Q91WE4"/>
<dbReference type="BioGRID" id="240466">
    <property type="interactions" value="2"/>
</dbReference>
<dbReference type="FunCoup" id="Q91WE4">
    <property type="interactions" value="1193"/>
</dbReference>
<dbReference type="STRING" id="10090.ENSMUSP00000158256"/>
<dbReference type="iPTMnet" id="Q91WE4"/>
<dbReference type="PhosphoSitePlus" id="Q91WE4"/>
<dbReference type="SwissPalm" id="Q91WE4"/>
<dbReference type="PaxDb" id="10090-ENSMUSP00000040450"/>
<dbReference type="PeptideAtlas" id="Q91WE4"/>
<dbReference type="Pumba" id="Q91WE4"/>
<dbReference type="TopDownProteomics" id="Q91WE4"/>
<dbReference type="Antibodypedia" id="42028">
    <property type="antibodies" value="33 antibodies from 15 providers"/>
</dbReference>
<dbReference type="Ensembl" id="ENSMUST00000040284.6">
    <property type="protein sequence ID" value="ENSMUSP00000040450.5"/>
    <property type="gene ID" value="ENSMUSG00000036299.6"/>
</dbReference>
<dbReference type="Ensembl" id="ENSMUST00000236421.2">
    <property type="protein sequence ID" value="ENSMUSP00000157657.2"/>
    <property type="gene ID" value="ENSMUSG00000036299.6"/>
</dbReference>
<dbReference type="Ensembl" id="ENSMUST00000237263.2">
    <property type="protein sequence ID" value="ENSMUSP00000158256.2"/>
    <property type="gene ID" value="ENSMUSG00000036299.6"/>
</dbReference>
<dbReference type="GeneID" id="407819"/>
<dbReference type="KEGG" id="mmu:407819"/>
<dbReference type="UCSC" id="uc008fpx.1">
    <property type="organism name" value="mouse"/>
</dbReference>
<dbReference type="AGR" id="MGI:3039614"/>
<dbReference type="MGI" id="MGI:3039614">
    <property type="gene designation" value="BC031181"/>
</dbReference>
<dbReference type="VEuPathDB" id="HostDB:ENSMUSG00000036299"/>
<dbReference type="eggNOG" id="ENOG502S738">
    <property type="taxonomic scope" value="Eukaryota"/>
</dbReference>
<dbReference type="GeneTree" id="ENSGT00390000018741"/>
<dbReference type="HOGENOM" id="CLU_191635_0_0_1"/>
<dbReference type="InParanoid" id="Q91WE4"/>
<dbReference type="OMA" id="SRIWPGK"/>
<dbReference type="OrthoDB" id="10062823at2759"/>
<dbReference type="PhylomeDB" id="Q91WE4"/>
<dbReference type="TreeFam" id="TF324662"/>
<dbReference type="BioGRID-ORCS" id="407819">
    <property type="hits" value="2 hits in 77 CRISPR screens"/>
</dbReference>
<dbReference type="PRO" id="PR:Q91WE4"/>
<dbReference type="Proteomes" id="UP000000589">
    <property type="component" value="Chromosome 18"/>
</dbReference>
<dbReference type="RNAct" id="Q91WE4">
    <property type="molecule type" value="protein"/>
</dbReference>
<dbReference type="Bgee" id="ENSMUSG00000036299">
    <property type="expression patterns" value="Expressed in facial nucleus and 256 other cell types or tissues"/>
</dbReference>
<dbReference type="GO" id="GO:0005783">
    <property type="term" value="C:endoplasmic reticulum"/>
    <property type="evidence" value="ECO:0000250"/>
    <property type="project" value="UniProtKB"/>
</dbReference>
<dbReference type="GO" id="GO:0005811">
    <property type="term" value="C:lipid droplet"/>
    <property type="evidence" value="ECO:0000250"/>
    <property type="project" value="UniProtKB"/>
</dbReference>
<dbReference type="InterPro" id="IPR026776">
    <property type="entry name" value="UPF0729_C18orf32-like"/>
</dbReference>
<dbReference type="PANTHER" id="PTHR13456">
    <property type="entry name" value="UPF0729 PROTEIN C18ORF32"/>
    <property type="match status" value="1"/>
</dbReference>
<dbReference type="PANTHER" id="PTHR13456:SF0">
    <property type="entry name" value="UPF0729 PROTEIN C18ORF32"/>
    <property type="match status" value="1"/>
</dbReference>
<dbReference type="Pfam" id="PF14975">
    <property type="entry name" value="DUF4512"/>
    <property type="match status" value="1"/>
</dbReference>
<keyword id="KW-0256">Endoplasmic reticulum</keyword>
<keyword id="KW-0551">Lipid droplet</keyword>
<keyword id="KW-1185">Reference proteome</keyword>
<proteinExistence type="inferred from homology"/>
<evidence type="ECO:0000250" key="1">
    <source>
        <dbReference type="UniProtKB" id="Q8TCD1"/>
    </source>
</evidence>
<evidence type="ECO:0000256" key="2">
    <source>
        <dbReference type="SAM" id="MobiDB-lite"/>
    </source>
</evidence>
<evidence type="ECO:0000305" key="3"/>
<feature type="chain" id="PRO_0000321909" description="UPF0729 protein C18orf32 homolog">
    <location>
        <begin position="1"/>
        <end position="72"/>
    </location>
</feature>
<feature type="region of interest" description="Necessary for its localzation to the endoplasmic reticulum and lipid droplets" evidence="1">
    <location>
        <begin position="1"/>
        <end position="33"/>
    </location>
</feature>
<feature type="region of interest" description="Disordered" evidence="2">
    <location>
        <begin position="36"/>
        <end position="72"/>
    </location>
</feature>